<feature type="chain" id="PRO_0000249847" description="RELT-like protein 2">
    <location>
        <begin position="1"/>
        <end position="302"/>
    </location>
</feature>
<feature type="transmembrane region" description="Helical" evidence="3">
    <location>
        <begin position="15"/>
        <end position="35"/>
    </location>
</feature>
<feature type="region of interest" description="Disordered" evidence="4">
    <location>
        <begin position="47"/>
        <end position="68"/>
    </location>
</feature>
<feature type="region of interest" description="Disordered" evidence="4">
    <location>
        <begin position="135"/>
        <end position="164"/>
    </location>
</feature>
<feature type="region of interest" description="Disordered" evidence="4">
    <location>
        <begin position="177"/>
        <end position="212"/>
    </location>
</feature>
<feature type="region of interest" description="Disordered" evidence="4">
    <location>
        <begin position="247"/>
        <end position="302"/>
    </location>
</feature>
<feature type="compositionally biased region" description="Basic and acidic residues" evidence="4">
    <location>
        <begin position="148"/>
        <end position="158"/>
    </location>
</feature>
<feature type="compositionally biased region" description="Basic and acidic residues" evidence="4">
    <location>
        <begin position="177"/>
        <end position="188"/>
    </location>
</feature>
<feature type="compositionally biased region" description="Polar residues" evidence="4">
    <location>
        <begin position="277"/>
        <end position="294"/>
    </location>
</feature>
<feature type="modified residue" description="Phosphoserine" evidence="1">
    <location>
        <position position="52"/>
    </location>
</feature>
<organism>
    <name type="scientific">Rattus norvegicus</name>
    <name type="common">Rat</name>
    <dbReference type="NCBI Taxonomy" id="10116"/>
    <lineage>
        <taxon>Eukaryota</taxon>
        <taxon>Metazoa</taxon>
        <taxon>Chordata</taxon>
        <taxon>Craniata</taxon>
        <taxon>Vertebrata</taxon>
        <taxon>Euteleostomi</taxon>
        <taxon>Mammalia</taxon>
        <taxon>Eutheria</taxon>
        <taxon>Euarchontoglires</taxon>
        <taxon>Glires</taxon>
        <taxon>Rodentia</taxon>
        <taxon>Myomorpha</taxon>
        <taxon>Muroidea</taxon>
        <taxon>Muridae</taxon>
        <taxon>Murinae</taxon>
        <taxon>Rattus</taxon>
    </lineage>
</organism>
<evidence type="ECO:0000250" key="1">
    <source>
        <dbReference type="UniProtKB" id="Q8BRJ3"/>
    </source>
</evidence>
<evidence type="ECO:0000250" key="2">
    <source>
        <dbReference type="UniProtKB" id="Q8NC24"/>
    </source>
</evidence>
<evidence type="ECO:0000255" key="3"/>
<evidence type="ECO:0000256" key="4">
    <source>
        <dbReference type="SAM" id="MobiDB-lite"/>
    </source>
</evidence>
<evidence type="ECO:0000305" key="5"/>
<reference key="1">
    <citation type="journal article" date="2004" name="Genome Res.">
        <title>The status, quality, and expansion of the NIH full-length cDNA project: the Mammalian Gene Collection (MGC).</title>
        <authorList>
            <consortium name="The MGC Project Team"/>
        </authorList>
    </citation>
    <scope>NUCLEOTIDE SEQUENCE [LARGE SCALE MRNA]</scope>
    <source>
        <tissue>Brain</tissue>
    </source>
</reference>
<dbReference type="EMBL" id="BC089946">
    <property type="protein sequence ID" value="AAH89946.1"/>
    <property type="molecule type" value="mRNA"/>
</dbReference>
<dbReference type="RefSeq" id="NP_001014171.1">
    <property type="nucleotide sequence ID" value="NM_001014149.1"/>
</dbReference>
<dbReference type="SMR" id="Q5FVJ4"/>
<dbReference type="FunCoup" id="Q5FVJ4">
    <property type="interactions" value="874"/>
</dbReference>
<dbReference type="STRING" id="10116.ENSRNOP00000026526"/>
<dbReference type="PhosphoSitePlus" id="Q5FVJ4"/>
<dbReference type="SwissPalm" id="Q5FVJ4"/>
<dbReference type="PaxDb" id="10116-ENSRNOP00000026526"/>
<dbReference type="Ensembl" id="ENSRNOT00000026526.6">
    <property type="protein sequence ID" value="ENSRNOP00000026526.3"/>
    <property type="gene ID" value="ENSRNOG00000019575.6"/>
</dbReference>
<dbReference type="GeneID" id="361313"/>
<dbReference type="KEGG" id="rno:361313"/>
<dbReference type="UCSC" id="RGD:1305276">
    <property type="organism name" value="rat"/>
</dbReference>
<dbReference type="AGR" id="RGD:1305276"/>
<dbReference type="CTD" id="285613"/>
<dbReference type="RGD" id="1305276">
    <property type="gene designation" value="Rell2"/>
</dbReference>
<dbReference type="eggNOG" id="ENOG502RZW4">
    <property type="taxonomic scope" value="Eukaryota"/>
</dbReference>
<dbReference type="GeneTree" id="ENSGT00940000160541"/>
<dbReference type="HOGENOM" id="CLU_074130_0_0_1"/>
<dbReference type="InParanoid" id="Q5FVJ4"/>
<dbReference type="OMA" id="IPCAHEG"/>
<dbReference type="OrthoDB" id="9353106at2759"/>
<dbReference type="PhylomeDB" id="Q5FVJ4"/>
<dbReference type="TreeFam" id="TF332339"/>
<dbReference type="PRO" id="PR:Q5FVJ4"/>
<dbReference type="Proteomes" id="UP000002494">
    <property type="component" value="Chromosome 18"/>
</dbReference>
<dbReference type="Bgee" id="ENSRNOG00000019575">
    <property type="expression patterns" value="Expressed in cerebellum and 11 other cell types or tissues"/>
</dbReference>
<dbReference type="GO" id="GO:0005604">
    <property type="term" value="C:basement membrane"/>
    <property type="evidence" value="ECO:0000266"/>
    <property type="project" value="RGD"/>
</dbReference>
<dbReference type="GO" id="GO:0031012">
    <property type="term" value="C:extracellular matrix"/>
    <property type="evidence" value="ECO:0000266"/>
    <property type="project" value="RGD"/>
</dbReference>
<dbReference type="GO" id="GO:0005886">
    <property type="term" value="C:plasma membrane"/>
    <property type="evidence" value="ECO:0007669"/>
    <property type="project" value="UniProtKB-SubCell"/>
</dbReference>
<dbReference type="GO" id="GO:0005518">
    <property type="term" value="F:collagen binding"/>
    <property type="evidence" value="ECO:0000266"/>
    <property type="project" value="RGD"/>
</dbReference>
<dbReference type="GO" id="GO:0010811">
    <property type="term" value="P:positive regulation of cell-substrate adhesion"/>
    <property type="evidence" value="ECO:0000266"/>
    <property type="project" value="RGD"/>
</dbReference>
<dbReference type="GO" id="GO:1900745">
    <property type="term" value="P:positive regulation of p38MAPK cascade"/>
    <property type="evidence" value="ECO:0000250"/>
    <property type="project" value="UniProtKB"/>
</dbReference>
<dbReference type="InterPro" id="IPR042313">
    <property type="entry name" value="RELL2"/>
</dbReference>
<dbReference type="InterPro" id="IPR022248">
    <property type="entry name" value="TNF_rcpt_RELT"/>
</dbReference>
<dbReference type="PANTHER" id="PTHR31481:SF0">
    <property type="entry name" value="RELT-LIKE PROTEIN 2"/>
    <property type="match status" value="1"/>
</dbReference>
<dbReference type="PANTHER" id="PTHR31481">
    <property type="entry name" value="RELT-LIKE PROTEIN 2 RELL2"/>
    <property type="match status" value="1"/>
</dbReference>
<dbReference type="Pfam" id="PF12606">
    <property type="entry name" value="RELT"/>
    <property type="match status" value="1"/>
</dbReference>
<name>RELL2_RAT</name>
<protein>
    <recommendedName>
        <fullName>RELT-like protein 2</fullName>
    </recommendedName>
</protein>
<sequence>MSEPQPGLEPPQHGLYMLFLLVLVFFLMGLVGFMICHVLKKKGYRCRTSRGSEPDDAQLQPPEDDDVNEDTVERIVRCIIQNEANAEALKEMLGDSEGEGTVQLSSVDATSSLQDGAPSHHHTVHLGSAAPCIHCSRSKRPPLVRQGRSKEGKGRPRPGETTVFSVGRFRVTHIEKRYGLHEHRDGSPTDRSWGSGGGQEPGVSQVAGGQPRTGTAAIERLLPEPPPSQAAATHPVQNGRLKDASLVPCTLEGTPGTSAELNVGTRGTGPSPGLPSQEANGQPTKLDTSGQQDSLPPEAGGM</sequence>
<keyword id="KW-1003">Cell membrane</keyword>
<keyword id="KW-0472">Membrane</keyword>
<keyword id="KW-0597">Phosphoprotein</keyword>
<keyword id="KW-1185">Reference proteome</keyword>
<keyword id="KW-0812">Transmembrane</keyword>
<keyword id="KW-1133">Transmembrane helix</keyword>
<accession>Q5FVJ4</accession>
<comment type="function">
    <text evidence="2">Induces activation of MAPK14/p38 cascade, when overexpressed. Induces apoptosis, when overexpressed.</text>
</comment>
<comment type="subunit">
    <text evidence="2">Interacts with RELT, RELL1, OXSR1, PLSCR1 and TRAF2.</text>
</comment>
<comment type="subcellular location">
    <subcellularLocation>
        <location evidence="2">Cell membrane</location>
        <topology evidence="2">Single-pass membrane protein</topology>
    </subcellularLocation>
</comment>
<comment type="similarity">
    <text evidence="5">Belongs to the RELT family.</text>
</comment>
<proteinExistence type="evidence at transcript level"/>
<gene>
    <name type="primary">Rell2</name>
</gene>